<evidence type="ECO:0000255" key="1">
    <source>
        <dbReference type="HAMAP-Rule" id="MF_00491"/>
    </source>
</evidence>
<keyword id="KW-0472">Membrane</keyword>
<keyword id="KW-0520">NAD</keyword>
<keyword id="KW-0521">NADP</keyword>
<keyword id="KW-0618">Plastoquinone</keyword>
<keyword id="KW-0874">Quinone</keyword>
<keyword id="KW-0793">Thylakoid</keyword>
<keyword id="KW-1278">Translocase</keyword>
<keyword id="KW-0812">Transmembrane</keyword>
<keyword id="KW-1133">Transmembrane helix</keyword>
<protein>
    <recommendedName>
        <fullName evidence="1">NAD(P)H-quinone oxidoreductase chain 4 1</fullName>
        <ecNumber evidence="1">7.1.1.-</ecNumber>
    </recommendedName>
    <alternativeName>
        <fullName evidence="1">NAD(P)H dehydrogenase I, chain 4 1</fullName>
    </alternativeName>
    <alternativeName>
        <fullName evidence="1">NDH-1, chain 4 1</fullName>
    </alternativeName>
</protein>
<reference key="1">
    <citation type="journal article" date="2007" name="ISME J.">
        <title>Population level functional diversity in a microbial community revealed by comparative genomic and metagenomic analyses.</title>
        <authorList>
            <person name="Bhaya D."/>
            <person name="Grossman A.R."/>
            <person name="Steunou A.-S."/>
            <person name="Khuri N."/>
            <person name="Cohan F.M."/>
            <person name="Hamamura N."/>
            <person name="Melendrez M.C."/>
            <person name="Bateson M.M."/>
            <person name="Ward D.M."/>
            <person name="Heidelberg J.F."/>
        </authorList>
    </citation>
    <scope>NUCLEOTIDE SEQUENCE [LARGE SCALE GENOMIC DNA]</scope>
    <source>
        <strain>JA-3-3Ab</strain>
    </source>
</reference>
<feature type="chain" id="PRO_0000343258" description="NAD(P)H-quinone oxidoreductase chain 4 1">
    <location>
        <begin position="1"/>
        <end position="526"/>
    </location>
</feature>
<feature type="transmembrane region" description="Helical" evidence="1">
    <location>
        <begin position="7"/>
        <end position="27"/>
    </location>
</feature>
<feature type="transmembrane region" description="Helical" evidence="1">
    <location>
        <begin position="35"/>
        <end position="55"/>
    </location>
</feature>
<feature type="transmembrane region" description="Helical" evidence="1">
    <location>
        <begin position="86"/>
        <end position="106"/>
    </location>
</feature>
<feature type="transmembrane region" description="Helical" evidence="1">
    <location>
        <begin position="114"/>
        <end position="134"/>
    </location>
</feature>
<feature type="transmembrane region" description="Helical" evidence="1">
    <location>
        <begin position="135"/>
        <end position="155"/>
    </location>
</feature>
<feature type="transmembrane region" description="Helical" evidence="1">
    <location>
        <begin position="168"/>
        <end position="188"/>
    </location>
</feature>
<feature type="transmembrane region" description="Helical" evidence="1">
    <location>
        <begin position="208"/>
        <end position="228"/>
    </location>
</feature>
<feature type="transmembrane region" description="Helical" evidence="1">
    <location>
        <begin position="242"/>
        <end position="262"/>
    </location>
</feature>
<feature type="transmembrane region" description="Helical" evidence="1">
    <location>
        <begin position="276"/>
        <end position="296"/>
    </location>
</feature>
<feature type="transmembrane region" description="Helical" evidence="1">
    <location>
        <begin position="310"/>
        <end position="330"/>
    </location>
</feature>
<feature type="transmembrane region" description="Helical" evidence="1">
    <location>
        <begin position="331"/>
        <end position="351"/>
    </location>
</feature>
<feature type="transmembrane region" description="Helical" evidence="1">
    <location>
        <begin position="374"/>
        <end position="396"/>
    </location>
</feature>
<feature type="transmembrane region" description="Helical" evidence="1">
    <location>
        <begin position="417"/>
        <end position="437"/>
    </location>
</feature>
<feature type="transmembrane region" description="Helical" evidence="1">
    <location>
        <begin position="463"/>
        <end position="483"/>
    </location>
</feature>
<comment type="function">
    <text evidence="1">NDH-1 shuttles electrons from NAD(P)H, via FMN and iron-sulfur (Fe-S) centers, to quinones in the respiratory chain. The immediate electron acceptor for the enzyme in this species is believed to be plastoquinone. Couples the redox reaction to proton translocation (for every two electrons transferred, four hydrogen ions are translocated across the cytoplasmic membrane), and thus conserves the redox energy in a proton gradient.</text>
</comment>
<comment type="catalytic activity">
    <reaction evidence="1">
        <text>a plastoquinone + NADH + (n+1) H(+)(in) = a plastoquinol + NAD(+) + n H(+)(out)</text>
        <dbReference type="Rhea" id="RHEA:42608"/>
        <dbReference type="Rhea" id="RHEA-COMP:9561"/>
        <dbReference type="Rhea" id="RHEA-COMP:9562"/>
        <dbReference type="ChEBI" id="CHEBI:15378"/>
        <dbReference type="ChEBI" id="CHEBI:17757"/>
        <dbReference type="ChEBI" id="CHEBI:57540"/>
        <dbReference type="ChEBI" id="CHEBI:57945"/>
        <dbReference type="ChEBI" id="CHEBI:62192"/>
    </reaction>
</comment>
<comment type="catalytic activity">
    <reaction evidence="1">
        <text>a plastoquinone + NADPH + (n+1) H(+)(in) = a plastoquinol + NADP(+) + n H(+)(out)</text>
        <dbReference type="Rhea" id="RHEA:42612"/>
        <dbReference type="Rhea" id="RHEA-COMP:9561"/>
        <dbReference type="Rhea" id="RHEA-COMP:9562"/>
        <dbReference type="ChEBI" id="CHEBI:15378"/>
        <dbReference type="ChEBI" id="CHEBI:17757"/>
        <dbReference type="ChEBI" id="CHEBI:57783"/>
        <dbReference type="ChEBI" id="CHEBI:58349"/>
        <dbReference type="ChEBI" id="CHEBI:62192"/>
    </reaction>
</comment>
<comment type="subcellular location">
    <subcellularLocation>
        <location evidence="1">Cellular thylakoid membrane</location>
        <topology evidence="1">Multi-pass membrane protein</topology>
    </subcellularLocation>
</comment>
<comment type="similarity">
    <text evidence="1">Belongs to the complex I subunit 4 family.</text>
</comment>
<sequence>MSNSLEFPWLSALVLLPLLAAFGIPLLPQSRWARWYALAVGALDLGLMAYIFGWHYDLRDFSLQLAERYAWVPQIGFHWSLAVDGLSFPLVLLSGLITTLAIVAAWNLTHKPRLFFFLLLLMYGAQVGVFLAQDLLLFFLMWEIELVPVYLLIAIWGGPQRQYAATKFILYTAAASIFILVGSLAMAFGSEGFSLEMAELGAKSYPLALQILAYAAFLIAFGVKLPVFPLHTWLPDAHSEASAPISMILAGVLLKMGGYGLIRLNVGILSEAHVYFAPVLAVLGAVNIVYGALAALGQNYLKRRLAYSSIAHMGFVLIGIAAFTELGLNGALLQMISHGLIAAVLFFLTGITYERTHTLALDKLGGLAKQMPKAFALFTAGSLASLALPGMSGFVGELTVFLGLITSDAYAPTFKAGIALLAAVGIILTPIYLLSMLRQVFYGAQDPGLVLEDYLGDLRPREMAVALCLLLPILGIGLYPRLATQTYDVTTVAVAAQLRSALPTEIVQRPLLPVQPAQVAALPPTD</sequence>
<gene>
    <name evidence="1" type="primary">ndhD1</name>
    <name type="ordered locus">CYA_0520</name>
</gene>
<dbReference type="EC" id="7.1.1.-" evidence="1"/>
<dbReference type="EMBL" id="CP000239">
    <property type="protein sequence ID" value="ABC98737.1"/>
    <property type="molecule type" value="Genomic_DNA"/>
</dbReference>
<dbReference type="RefSeq" id="WP_011429424.1">
    <property type="nucleotide sequence ID" value="NC_007775.1"/>
</dbReference>
<dbReference type="SMR" id="Q2JWW3"/>
<dbReference type="STRING" id="321327.CYA_0520"/>
<dbReference type="KEGG" id="cya:CYA_0520"/>
<dbReference type="eggNOG" id="COG1008">
    <property type="taxonomic scope" value="Bacteria"/>
</dbReference>
<dbReference type="HOGENOM" id="CLU_007100_4_2_3"/>
<dbReference type="OrthoDB" id="9811718at2"/>
<dbReference type="Proteomes" id="UP000008818">
    <property type="component" value="Chromosome"/>
</dbReference>
<dbReference type="GO" id="GO:0031676">
    <property type="term" value="C:plasma membrane-derived thylakoid membrane"/>
    <property type="evidence" value="ECO:0007669"/>
    <property type="project" value="UniProtKB-SubCell"/>
</dbReference>
<dbReference type="GO" id="GO:0008137">
    <property type="term" value="F:NADH dehydrogenase (ubiquinone) activity"/>
    <property type="evidence" value="ECO:0007669"/>
    <property type="project" value="InterPro"/>
</dbReference>
<dbReference type="GO" id="GO:0048039">
    <property type="term" value="F:ubiquinone binding"/>
    <property type="evidence" value="ECO:0007669"/>
    <property type="project" value="TreeGrafter"/>
</dbReference>
<dbReference type="GO" id="GO:0042773">
    <property type="term" value="P:ATP synthesis coupled electron transport"/>
    <property type="evidence" value="ECO:0007669"/>
    <property type="project" value="InterPro"/>
</dbReference>
<dbReference type="GO" id="GO:0015990">
    <property type="term" value="P:electron transport coupled proton transport"/>
    <property type="evidence" value="ECO:0007669"/>
    <property type="project" value="TreeGrafter"/>
</dbReference>
<dbReference type="HAMAP" id="MF_00491">
    <property type="entry name" value="NDH1_NuoM"/>
    <property type="match status" value="1"/>
</dbReference>
<dbReference type="InterPro" id="IPR022997">
    <property type="entry name" value="NADH_Q_OxRdtase_chain4"/>
</dbReference>
<dbReference type="InterPro" id="IPR010227">
    <property type="entry name" value="NADH_Q_OxRdtase_chainM/4"/>
</dbReference>
<dbReference type="InterPro" id="IPR003918">
    <property type="entry name" value="NADH_UbQ_OxRdtase"/>
</dbReference>
<dbReference type="InterPro" id="IPR001750">
    <property type="entry name" value="ND/Mrp_TM"/>
</dbReference>
<dbReference type="NCBIfam" id="TIGR01972">
    <property type="entry name" value="NDH_I_M"/>
    <property type="match status" value="1"/>
</dbReference>
<dbReference type="NCBIfam" id="NF009212">
    <property type="entry name" value="PRK12561.1"/>
    <property type="match status" value="1"/>
</dbReference>
<dbReference type="PANTHER" id="PTHR43507:SF21">
    <property type="entry name" value="NAD(P)H-QUINONE OXIDOREDUCTASE CHAIN 4, CHLOROPLASTIC"/>
    <property type="match status" value="1"/>
</dbReference>
<dbReference type="PANTHER" id="PTHR43507">
    <property type="entry name" value="NADH-UBIQUINONE OXIDOREDUCTASE CHAIN 4"/>
    <property type="match status" value="1"/>
</dbReference>
<dbReference type="Pfam" id="PF00361">
    <property type="entry name" value="Proton_antipo_M"/>
    <property type="match status" value="1"/>
</dbReference>
<dbReference type="PRINTS" id="PR01437">
    <property type="entry name" value="NUOXDRDTASE4"/>
</dbReference>
<accession>Q2JWW3</accession>
<proteinExistence type="inferred from homology"/>
<name>NU4C1_SYNJA</name>
<organism>
    <name type="scientific">Synechococcus sp. (strain JA-3-3Ab)</name>
    <name type="common">Cyanobacteria bacterium Yellowstone A-Prime</name>
    <dbReference type="NCBI Taxonomy" id="321327"/>
    <lineage>
        <taxon>Bacteria</taxon>
        <taxon>Bacillati</taxon>
        <taxon>Cyanobacteriota</taxon>
        <taxon>Cyanophyceae</taxon>
        <taxon>Synechococcales</taxon>
        <taxon>Synechococcaceae</taxon>
        <taxon>Synechococcus</taxon>
    </lineage>
</organism>